<organism>
    <name type="scientific">Salmonella paratyphi A (strain ATCC 9150 / SARB42)</name>
    <dbReference type="NCBI Taxonomy" id="295319"/>
    <lineage>
        <taxon>Bacteria</taxon>
        <taxon>Pseudomonadati</taxon>
        <taxon>Pseudomonadota</taxon>
        <taxon>Gammaproteobacteria</taxon>
        <taxon>Enterobacterales</taxon>
        <taxon>Enterobacteriaceae</taxon>
        <taxon>Salmonella</taxon>
    </lineage>
</organism>
<gene>
    <name evidence="1" type="primary">norR</name>
    <name type="ordered locus">SPA2697</name>
</gene>
<dbReference type="EMBL" id="CP000026">
    <property type="protein sequence ID" value="AAV78554.1"/>
    <property type="status" value="ALT_FRAME"/>
    <property type="molecule type" value="Genomic_DNA"/>
</dbReference>
<dbReference type="SMR" id="Q5PF20"/>
<dbReference type="KEGG" id="spt:SPA2697"/>
<dbReference type="HOGENOM" id="CLU_000445_125_2_6"/>
<dbReference type="UniPathway" id="UPA00638"/>
<dbReference type="Proteomes" id="UP000008185">
    <property type="component" value="Chromosome"/>
</dbReference>
<dbReference type="GO" id="GO:0005524">
    <property type="term" value="F:ATP binding"/>
    <property type="evidence" value="ECO:0007669"/>
    <property type="project" value="UniProtKB-UniRule"/>
</dbReference>
<dbReference type="GO" id="GO:0016887">
    <property type="term" value="F:ATP hydrolysis activity"/>
    <property type="evidence" value="ECO:0007669"/>
    <property type="project" value="InterPro"/>
</dbReference>
<dbReference type="GO" id="GO:0003677">
    <property type="term" value="F:DNA binding"/>
    <property type="evidence" value="ECO:0007669"/>
    <property type="project" value="UniProtKB-KW"/>
</dbReference>
<dbReference type="GO" id="GO:0003700">
    <property type="term" value="F:DNA-binding transcription factor activity"/>
    <property type="evidence" value="ECO:0007669"/>
    <property type="project" value="UniProtKB-UniRule"/>
</dbReference>
<dbReference type="GO" id="GO:0000160">
    <property type="term" value="P:phosphorelay signal transduction system"/>
    <property type="evidence" value="ECO:0007669"/>
    <property type="project" value="UniProtKB-UniRule"/>
</dbReference>
<dbReference type="CDD" id="cd00009">
    <property type="entry name" value="AAA"/>
    <property type="match status" value="1"/>
</dbReference>
<dbReference type="FunFam" id="1.10.8.60:FF:000045">
    <property type="entry name" value="Anaerobic nitric oxide reductase transcription regulator NorR"/>
    <property type="match status" value="1"/>
</dbReference>
<dbReference type="FunFam" id="3.30.450.40:FF:000021">
    <property type="entry name" value="Anaerobic nitric oxide reductase transcription regulator NorR"/>
    <property type="match status" value="1"/>
</dbReference>
<dbReference type="FunFam" id="3.40.50.300:FF:000006">
    <property type="entry name" value="DNA-binding transcriptional regulator NtrC"/>
    <property type="match status" value="1"/>
</dbReference>
<dbReference type="Gene3D" id="1.10.8.60">
    <property type="match status" value="1"/>
</dbReference>
<dbReference type="Gene3D" id="3.30.450.40">
    <property type="match status" value="1"/>
</dbReference>
<dbReference type="Gene3D" id="1.10.10.60">
    <property type="entry name" value="Homeodomain-like"/>
    <property type="match status" value="1"/>
</dbReference>
<dbReference type="Gene3D" id="3.40.50.300">
    <property type="entry name" value="P-loop containing nucleotide triphosphate hydrolases"/>
    <property type="match status" value="1"/>
</dbReference>
<dbReference type="HAMAP" id="MF_01314">
    <property type="entry name" value="NorR"/>
    <property type="match status" value="1"/>
</dbReference>
<dbReference type="InterPro" id="IPR003593">
    <property type="entry name" value="AAA+_ATPase"/>
</dbReference>
<dbReference type="InterPro" id="IPR003018">
    <property type="entry name" value="GAF"/>
</dbReference>
<dbReference type="InterPro" id="IPR029016">
    <property type="entry name" value="GAF-like_dom_sf"/>
</dbReference>
<dbReference type="InterPro" id="IPR009057">
    <property type="entry name" value="Homeodomain-like_sf"/>
</dbReference>
<dbReference type="InterPro" id="IPR023944">
    <property type="entry name" value="NorR"/>
</dbReference>
<dbReference type="InterPro" id="IPR027417">
    <property type="entry name" value="P-loop_NTPase"/>
</dbReference>
<dbReference type="InterPro" id="IPR002078">
    <property type="entry name" value="Sigma_54_int"/>
</dbReference>
<dbReference type="InterPro" id="IPR025662">
    <property type="entry name" value="Sigma_54_int_dom_ATP-bd_1"/>
</dbReference>
<dbReference type="InterPro" id="IPR025943">
    <property type="entry name" value="Sigma_54_int_dom_ATP-bd_2"/>
</dbReference>
<dbReference type="InterPro" id="IPR025944">
    <property type="entry name" value="Sigma_54_int_dom_CS"/>
</dbReference>
<dbReference type="NCBIfam" id="NF003451">
    <property type="entry name" value="PRK05022.1"/>
    <property type="match status" value="1"/>
</dbReference>
<dbReference type="PANTHER" id="PTHR32071:SF35">
    <property type="entry name" value="ANAEROBIC NITRIC OXIDE REDUCTASE TRANSCRIPTION REGULATOR NORR"/>
    <property type="match status" value="1"/>
</dbReference>
<dbReference type="PANTHER" id="PTHR32071">
    <property type="entry name" value="TRANSCRIPTIONAL REGULATORY PROTEIN"/>
    <property type="match status" value="1"/>
</dbReference>
<dbReference type="Pfam" id="PF01590">
    <property type="entry name" value="GAF"/>
    <property type="match status" value="1"/>
</dbReference>
<dbReference type="Pfam" id="PF00158">
    <property type="entry name" value="Sigma54_activat"/>
    <property type="match status" value="1"/>
</dbReference>
<dbReference type="SMART" id="SM00382">
    <property type="entry name" value="AAA"/>
    <property type="match status" value="1"/>
</dbReference>
<dbReference type="SMART" id="SM00065">
    <property type="entry name" value="GAF"/>
    <property type="match status" value="1"/>
</dbReference>
<dbReference type="SUPFAM" id="SSF55781">
    <property type="entry name" value="GAF domain-like"/>
    <property type="match status" value="1"/>
</dbReference>
<dbReference type="SUPFAM" id="SSF46689">
    <property type="entry name" value="Homeodomain-like"/>
    <property type="match status" value="1"/>
</dbReference>
<dbReference type="SUPFAM" id="SSF52540">
    <property type="entry name" value="P-loop containing nucleoside triphosphate hydrolases"/>
    <property type="match status" value="1"/>
</dbReference>
<dbReference type="PROSITE" id="PS00675">
    <property type="entry name" value="SIGMA54_INTERACT_1"/>
    <property type="match status" value="1"/>
</dbReference>
<dbReference type="PROSITE" id="PS00676">
    <property type="entry name" value="SIGMA54_INTERACT_2"/>
    <property type="match status" value="1"/>
</dbReference>
<dbReference type="PROSITE" id="PS00688">
    <property type="entry name" value="SIGMA54_INTERACT_3"/>
    <property type="match status" value="1"/>
</dbReference>
<dbReference type="PROSITE" id="PS50045">
    <property type="entry name" value="SIGMA54_INTERACT_4"/>
    <property type="match status" value="1"/>
</dbReference>
<protein>
    <recommendedName>
        <fullName evidence="1">Anaerobic nitric oxide reductase transcription regulator NorR</fullName>
    </recommendedName>
</protein>
<sequence>MSFPVEVLAGIAIELQRGIGHQDRFQRLITTLRQVLACDASALLRYESRQFIPLAIDGLAQDVLGRRFTLEGHPRLEAIARAGDVVRFPADSDLPDPYDGLIPGQESLKVHACVGLPLFAGQNLIGALTLDAMTPEQFEVFSDEELRLVAALAAGALSNALLIEQLESQNMLPGSSGVFEPIKETHMIGLSPAMTQLKKEIEIVAGSDLNVLIGGETGTGKELVAKAIHQGSPRAVNPLVYLNCAALPESVAESELFGHVKGAFTGAISNRSGKFEMADNGTLFLDEIGELSLALQAKLLRVLQYGDIQRVGDDRSLRVDVRVLAATNRDLREEVLAGRFRADLFHRLSVFPLFVPPLRERGDDVVLLAGYFCEQCRLRLGLSRVVLSPGARRHLLNYGWPGNVRELEHAIHRAVVLARATRAGDEVVLEEQHFALSEDVLPAPSAESFLALPACRNLRESTENFQREMIRQALAQNNHNWAASARALETDVANLHRLAKRLGLKD</sequence>
<accession>Q5PF20</accession>
<name>NORR_SALPA</name>
<keyword id="KW-0067">ATP-binding</keyword>
<keyword id="KW-0238">DNA-binding</keyword>
<keyword id="KW-0547">Nucleotide-binding</keyword>
<keyword id="KW-0597">Phosphoprotein</keyword>
<keyword id="KW-0804">Transcription</keyword>
<keyword id="KW-0805">Transcription regulation</keyword>
<proteinExistence type="inferred from homology"/>
<evidence type="ECO:0000255" key="1">
    <source>
        <dbReference type="HAMAP-Rule" id="MF_01314"/>
    </source>
</evidence>
<evidence type="ECO:0000305" key="2"/>
<feature type="chain" id="PRO_0000305623" description="Anaerobic nitric oxide reductase transcription regulator NorR">
    <location>
        <begin position="1"/>
        <end position="506"/>
    </location>
</feature>
<feature type="domain" description="Sigma-54 factor interaction" evidence="1">
    <location>
        <begin position="187"/>
        <end position="416"/>
    </location>
</feature>
<feature type="DNA-binding region" description="H-T-H motif" evidence="1">
    <location>
        <begin position="481"/>
        <end position="500"/>
    </location>
</feature>
<feature type="binding site" evidence="1">
    <location>
        <begin position="215"/>
        <end position="222"/>
    </location>
    <ligand>
        <name>ATP</name>
        <dbReference type="ChEBI" id="CHEBI:30616"/>
    </ligand>
</feature>
<feature type="binding site" evidence="1">
    <location>
        <begin position="278"/>
        <end position="287"/>
    </location>
    <ligand>
        <name>ATP</name>
        <dbReference type="ChEBI" id="CHEBI:30616"/>
    </ligand>
</feature>
<feature type="modified residue" description="4-aspartylphosphate" evidence="1">
    <location>
        <position position="57"/>
    </location>
</feature>
<comment type="function">
    <text evidence="1">Required for the expression of anaerobic nitric oxide (NO) reductase, acts as a transcriptional activator for at least the norVW operon. Activation also requires sigma-54.</text>
</comment>
<comment type="pathway">
    <text evidence="1">Nitrogen metabolism; nitric oxide reduction.</text>
</comment>
<comment type="sequence caution" evidence="2">
    <conflict type="frameshift">
        <sequence resource="EMBL-CDS" id="AAV78554"/>
    </conflict>
</comment>
<reference key="1">
    <citation type="journal article" date="2004" name="Nat. Genet.">
        <title>Comparison of genome degradation in Paratyphi A and Typhi, human-restricted serovars of Salmonella enterica that cause typhoid.</title>
        <authorList>
            <person name="McClelland M."/>
            <person name="Sanderson K.E."/>
            <person name="Clifton S.W."/>
            <person name="Latreille P."/>
            <person name="Porwollik S."/>
            <person name="Sabo A."/>
            <person name="Meyer R."/>
            <person name="Bieri T."/>
            <person name="Ozersky P."/>
            <person name="McLellan M."/>
            <person name="Harkins C.R."/>
            <person name="Wang C."/>
            <person name="Nguyen C."/>
            <person name="Berghoff A."/>
            <person name="Elliott G."/>
            <person name="Kohlberg S."/>
            <person name="Strong C."/>
            <person name="Du F."/>
            <person name="Carter J."/>
            <person name="Kremizki C."/>
            <person name="Layman D."/>
            <person name="Leonard S."/>
            <person name="Sun H."/>
            <person name="Fulton L."/>
            <person name="Nash W."/>
            <person name="Miner T."/>
            <person name="Minx P."/>
            <person name="Delehaunty K."/>
            <person name="Fronick C."/>
            <person name="Magrini V."/>
            <person name="Nhan M."/>
            <person name="Warren W."/>
            <person name="Florea L."/>
            <person name="Spieth J."/>
            <person name="Wilson R.K."/>
        </authorList>
    </citation>
    <scope>NUCLEOTIDE SEQUENCE [LARGE SCALE GENOMIC DNA]</scope>
    <source>
        <strain>ATCC 9150 / SARB42</strain>
    </source>
</reference>